<reference key="1">
    <citation type="journal article" date="2007" name="Genome Res.">
        <title>Genome characteristics of facultatively symbiotic Frankia sp. strains reflect host range and host plant biogeography.</title>
        <authorList>
            <person name="Normand P."/>
            <person name="Lapierre P."/>
            <person name="Tisa L.S."/>
            <person name="Gogarten J.P."/>
            <person name="Alloisio N."/>
            <person name="Bagnarol E."/>
            <person name="Bassi C.A."/>
            <person name="Berry A.M."/>
            <person name="Bickhart D.M."/>
            <person name="Choisne N."/>
            <person name="Couloux A."/>
            <person name="Cournoyer B."/>
            <person name="Cruveiller S."/>
            <person name="Daubin V."/>
            <person name="Demange N."/>
            <person name="Francino M.P."/>
            <person name="Goltsman E."/>
            <person name="Huang Y."/>
            <person name="Kopp O.R."/>
            <person name="Labarre L."/>
            <person name="Lapidus A."/>
            <person name="Lavire C."/>
            <person name="Marechal J."/>
            <person name="Martinez M."/>
            <person name="Mastronunzio J.E."/>
            <person name="Mullin B.C."/>
            <person name="Niemann J."/>
            <person name="Pujic P."/>
            <person name="Rawnsley T."/>
            <person name="Rouy Z."/>
            <person name="Schenowitz C."/>
            <person name="Sellstedt A."/>
            <person name="Tavares F."/>
            <person name="Tomkins J.P."/>
            <person name="Vallenet D."/>
            <person name="Valverde C."/>
            <person name="Wall L.G."/>
            <person name="Wang Y."/>
            <person name="Medigue C."/>
            <person name="Benson D.R."/>
        </authorList>
    </citation>
    <scope>NUCLEOTIDE SEQUENCE [LARGE SCALE GENOMIC DNA]</scope>
    <source>
        <strain>EAN1pec</strain>
    </source>
</reference>
<accession>A8KYR5</accession>
<name>PGK_PARS2</name>
<feature type="chain" id="PRO_1000192832" description="Phosphoglycerate kinase">
    <location>
        <begin position="1"/>
        <end position="400"/>
    </location>
</feature>
<feature type="binding site" evidence="1">
    <location>
        <begin position="19"/>
        <end position="21"/>
    </location>
    <ligand>
        <name>substrate</name>
    </ligand>
</feature>
<feature type="binding site" evidence="1">
    <location>
        <position position="38"/>
    </location>
    <ligand>
        <name>substrate</name>
    </ligand>
</feature>
<feature type="binding site" evidence="1">
    <location>
        <begin position="61"/>
        <end position="64"/>
    </location>
    <ligand>
        <name>substrate</name>
    </ligand>
</feature>
<feature type="binding site" evidence="1">
    <location>
        <position position="124"/>
    </location>
    <ligand>
        <name>substrate</name>
    </ligand>
</feature>
<feature type="binding site" evidence="1">
    <location>
        <position position="161"/>
    </location>
    <ligand>
        <name>substrate</name>
    </ligand>
</feature>
<feature type="binding site" evidence="1">
    <location>
        <position position="211"/>
    </location>
    <ligand>
        <name>ATP</name>
        <dbReference type="ChEBI" id="CHEBI:30616"/>
    </ligand>
</feature>
<feature type="binding site" evidence="1">
    <location>
        <position position="299"/>
    </location>
    <ligand>
        <name>ATP</name>
        <dbReference type="ChEBI" id="CHEBI:30616"/>
    </ligand>
</feature>
<feature type="binding site" evidence="1">
    <location>
        <position position="330"/>
    </location>
    <ligand>
        <name>ATP</name>
        <dbReference type="ChEBI" id="CHEBI:30616"/>
    </ligand>
</feature>
<feature type="binding site" evidence="1">
    <location>
        <begin position="356"/>
        <end position="359"/>
    </location>
    <ligand>
        <name>ATP</name>
        <dbReference type="ChEBI" id="CHEBI:30616"/>
    </ligand>
</feature>
<proteinExistence type="inferred from homology"/>
<protein>
    <recommendedName>
        <fullName evidence="1">Phosphoglycerate kinase</fullName>
        <ecNumber evidence="1">2.7.2.3</ecNumber>
    </recommendedName>
</protein>
<gene>
    <name evidence="1" type="primary">pgk</name>
    <name type="ordered locus">Franean1_2064</name>
</gene>
<keyword id="KW-0067">ATP-binding</keyword>
<keyword id="KW-0963">Cytoplasm</keyword>
<keyword id="KW-0324">Glycolysis</keyword>
<keyword id="KW-0418">Kinase</keyword>
<keyword id="KW-0547">Nucleotide-binding</keyword>
<keyword id="KW-0808">Transferase</keyword>
<evidence type="ECO:0000255" key="1">
    <source>
        <dbReference type="HAMAP-Rule" id="MF_00145"/>
    </source>
</evidence>
<organism>
    <name type="scientific">Parafrankia sp. (strain EAN1pec)</name>
    <dbReference type="NCBI Taxonomy" id="298653"/>
    <lineage>
        <taxon>Bacteria</taxon>
        <taxon>Bacillati</taxon>
        <taxon>Actinomycetota</taxon>
        <taxon>Actinomycetes</taxon>
        <taxon>Frankiales</taxon>
        <taxon>Frankiaceae</taxon>
        <taxon>Parafrankia</taxon>
    </lineage>
</organism>
<sequence length="400" mass="41182">MRTIDDLQVTGHRVLVRSDLNVPLDHSKGAPRITDDGRVRASVPTIQALLDRNAKVIVCSHLGRPKGAPEEKYSLAPVAERLAELLGIPVAFAGDGGGDIAGDRAREVVGQLAEGQVALLENLRFHPGETSKDTVARATFADELSALAEFYVGDAFGAVHRAHASVSEVPKRLPHAAGRLVLTELEVLRALTAAPARPYAVVLGGSKVSDKLGVIRALLPKVDALLVGGGMCFTFLAALGHPVGASLLESEMIDTCKDLLAEAGDRLVLPTDVVVADRFAADAETAVVAADAIPDGWLGLDIGPASTAAFARVVAGAATIFWNGPMGVFEFAPFAEGTRGVAEAVASGGGFSVVGGGDSAAAVRILGIPEDDFSHISTGGGASLEYLEGKTLPGLAALDV</sequence>
<comment type="catalytic activity">
    <reaction evidence="1">
        <text>(2R)-3-phosphoglycerate + ATP = (2R)-3-phospho-glyceroyl phosphate + ADP</text>
        <dbReference type="Rhea" id="RHEA:14801"/>
        <dbReference type="ChEBI" id="CHEBI:30616"/>
        <dbReference type="ChEBI" id="CHEBI:57604"/>
        <dbReference type="ChEBI" id="CHEBI:58272"/>
        <dbReference type="ChEBI" id="CHEBI:456216"/>
        <dbReference type="EC" id="2.7.2.3"/>
    </reaction>
</comment>
<comment type="pathway">
    <text evidence="1">Carbohydrate degradation; glycolysis; pyruvate from D-glyceraldehyde 3-phosphate: step 2/5.</text>
</comment>
<comment type="subunit">
    <text evidence="1">Monomer.</text>
</comment>
<comment type="subcellular location">
    <subcellularLocation>
        <location evidence="1">Cytoplasm</location>
    </subcellularLocation>
</comment>
<comment type="similarity">
    <text evidence="1">Belongs to the phosphoglycerate kinase family.</text>
</comment>
<dbReference type="EC" id="2.7.2.3" evidence="1"/>
<dbReference type="EMBL" id="CP000820">
    <property type="protein sequence ID" value="ABW11501.1"/>
    <property type="molecule type" value="Genomic_DNA"/>
</dbReference>
<dbReference type="RefSeq" id="WP_020459668.1">
    <property type="nucleotide sequence ID" value="NC_009921.1"/>
</dbReference>
<dbReference type="SMR" id="A8KYR5"/>
<dbReference type="STRING" id="298653.Franean1_2064"/>
<dbReference type="KEGG" id="fre:Franean1_2064"/>
<dbReference type="eggNOG" id="COG0126">
    <property type="taxonomic scope" value="Bacteria"/>
</dbReference>
<dbReference type="HOGENOM" id="CLU_025427_0_2_11"/>
<dbReference type="UniPathway" id="UPA00109">
    <property type="reaction ID" value="UER00185"/>
</dbReference>
<dbReference type="GO" id="GO:0005829">
    <property type="term" value="C:cytosol"/>
    <property type="evidence" value="ECO:0007669"/>
    <property type="project" value="TreeGrafter"/>
</dbReference>
<dbReference type="GO" id="GO:0043531">
    <property type="term" value="F:ADP binding"/>
    <property type="evidence" value="ECO:0007669"/>
    <property type="project" value="TreeGrafter"/>
</dbReference>
<dbReference type="GO" id="GO:0005524">
    <property type="term" value="F:ATP binding"/>
    <property type="evidence" value="ECO:0007669"/>
    <property type="project" value="UniProtKB-KW"/>
</dbReference>
<dbReference type="GO" id="GO:0004618">
    <property type="term" value="F:phosphoglycerate kinase activity"/>
    <property type="evidence" value="ECO:0007669"/>
    <property type="project" value="UniProtKB-UniRule"/>
</dbReference>
<dbReference type="GO" id="GO:0006094">
    <property type="term" value="P:gluconeogenesis"/>
    <property type="evidence" value="ECO:0007669"/>
    <property type="project" value="TreeGrafter"/>
</dbReference>
<dbReference type="GO" id="GO:0006096">
    <property type="term" value="P:glycolytic process"/>
    <property type="evidence" value="ECO:0007669"/>
    <property type="project" value="UniProtKB-UniRule"/>
</dbReference>
<dbReference type="FunFam" id="3.40.50.1260:FF:000006">
    <property type="entry name" value="Phosphoglycerate kinase"/>
    <property type="match status" value="1"/>
</dbReference>
<dbReference type="FunFam" id="3.40.50.1260:FF:000031">
    <property type="entry name" value="Phosphoglycerate kinase 1"/>
    <property type="match status" value="1"/>
</dbReference>
<dbReference type="Gene3D" id="3.40.50.1260">
    <property type="entry name" value="Phosphoglycerate kinase, N-terminal domain"/>
    <property type="match status" value="2"/>
</dbReference>
<dbReference type="HAMAP" id="MF_00145">
    <property type="entry name" value="Phosphoglyc_kinase"/>
    <property type="match status" value="1"/>
</dbReference>
<dbReference type="InterPro" id="IPR001576">
    <property type="entry name" value="Phosphoglycerate_kinase"/>
</dbReference>
<dbReference type="InterPro" id="IPR015911">
    <property type="entry name" value="Phosphoglycerate_kinase_CS"/>
</dbReference>
<dbReference type="InterPro" id="IPR015824">
    <property type="entry name" value="Phosphoglycerate_kinase_N"/>
</dbReference>
<dbReference type="InterPro" id="IPR036043">
    <property type="entry name" value="Phosphoglycerate_kinase_sf"/>
</dbReference>
<dbReference type="PANTHER" id="PTHR11406">
    <property type="entry name" value="PHOSPHOGLYCERATE KINASE"/>
    <property type="match status" value="1"/>
</dbReference>
<dbReference type="PANTHER" id="PTHR11406:SF23">
    <property type="entry name" value="PHOSPHOGLYCERATE KINASE 1, CHLOROPLASTIC-RELATED"/>
    <property type="match status" value="1"/>
</dbReference>
<dbReference type="Pfam" id="PF00162">
    <property type="entry name" value="PGK"/>
    <property type="match status" value="1"/>
</dbReference>
<dbReference type="PIRSF" id="PIRSF000724">
    <property type="entry name" value="Pgk"/>
    <property type="match status" value="1"/>
</dbReference>
<dbReference type="PRINTS" id="PR00477">
    <property type="entry name" value="PHGLYCKINASE"/>
</dbReference>
<dbReference type="SUPFAM" id="SSF53748">
    <property type="entry name" value="Phosphoglycerate kinase"/>
    <property type="match status" value="1"/>
</dbReference>
<dbReference type="PROSITE" id="PS00111">
    <property type="entry name" value="PGLYCERATE_KINASE"/>
    <property type="match status" value="1"/>
</dbReference>